<reference key="1">
    <citation type="submission" date="2007-06" db="EMBL/GenBank/DDBJ databases">
        <title>Complete sequence of Methanococcus maripaludis C7.</title>
        <authorList>
            <consortium name="US DOE Joint Genome Institute"/>
            <person name="Copeland A."/>
            <person name="Lucas S."/>
            <person name="Lapidus A."/>
            <person name="Barry K."/>
            <person name="Glavina del Rio T."/>
            <person name="Dalin E."/>
            <person name="Tice H."/>
            <person name="Pitluck S."/>
            <person name="Clum A."/>
            <person name="Schmutz J."/>
            <person name="Larimer F."/>
            <person name="Land M."/>
            <person name="Hauser L."/>
            <person name="Kyrpides N."/>
            <person name="Anderson I."/>
            <person name="Sieprawska-Lupa M."/>
            <person name="Whitman W.B."/>
            <person name="Richardson P."/>
        </authorList>
    </citation>
    <scope>NUCLEOTIDE SEQUENCE [LARGE SCALE GENOMIC DNA]</scope>
    <source>
        <strain>C7 / ATCC BAA-1331</strain>
    </source>
</reference>
<organism>
    <name type="scientific">Methanococcus maripaludis (strain C7 / ATCC BAA-1331)</name>
    <dbReference type="NCBI Taxonomy" id="426368"/>
    <lineage>
        <taxon>Archaea</taxon>
        <taxon>Methanobacteriati</taxon>
        <taxon>Methanobacteriota</taxon>
        <taxon>Methanomada group</taxon>
        <taxon>Methanococci</taxon>
        <taxon>Methanococcales</taxon>
        <taxon>Methanococcaceae</taxon>
        <taxon>Methanococcus</taxon>
    </lineage>
</organism>
<name>RLME_METM7</name>
<proteinExistence type="inferred from homology"/>
<comment type="function">
    <text evidence="1">Specifically methylates the uridine in position 2552 of 23S rRNA at the 2'-O position of the ribose in the fully assembled 50S ribosomal subunit.</text>
</comment>
<comment type="catalytic activity">
    <reaction evidence="1">
        <text>uridine(2552) in 23S rRNA + S-adenosyl-L-methionine = 2'-O-methyluridine(2552) in 23S rRNA + S-adenosyl-L-homocysteine + H(+)</text>
        <dbReference type="Rhea" id="RHEA:42720"/>
        <dbReference type="Rhea" id="RHEA-COMP:10202"/>
        <dbReference type="Rhea" id="RHEA-COMP:10203"/>
        <dbReference type="ChEBI" id="CHEBI:15378"/>
        <dbReference type="ChEBI" id="CHEBI:57856"/>
        <dbReference type="ChEBI" id="CHEBI:59789"/>
        <dbReference type="ChEBI" id="CHEBI:65315"/>
        <dbReference type="ChEBI" id="CHEBI:74478"/>
        <dbReference type="EC" id="2.1.1.166"/>
    </reaction>
</comment>
<comment type="subcellular location">
    <subcellularLocation>
        <location evidence="1">Cytoplasm</location>
    </subcellularLocation>
</comment>
<comment type="similarity">
    <text evidence="1">Belongs to the class I-like SAM-binding methyltransferase superfamily. RNA methyltransferase RlmE family.</text>
</comment>
<keyword id="KW-0963">Cytoplasm</keyword>
<keyword id="KW-0489">Methyltransferase</keyword>
<keyword id="KW-0698">rRNA processing</keyword>
<keyword id="KW-0949">S-adenosyl-L-methionine</keyword>
<keyword id="KW-0808">Transferase</keyword>
<gene>
    <name evidence="1" type="primary">rlmE</name>
    <name evidence="1" type="synonym">rrmJ</name>
    <name type="ordered locus">MmarC7_1628</name>
</gene>
<evidence type="ECO:0000255" key="1">
    <source>
        <dbReference type="HAMAP-Rule" id="MF_01547"/>
    </source>
</evidence>
<sequence>MGKKDKRWVLQRKNDHYYNLAKKRNYRSRATYKLFQLNEKFNLIKERNVVVDLGCAPGGWLQAARDIVGEKGFIVGIDLQTVKPLPYENVIAIKGDMTKEEILKQAKDLLPEKPDVIICDASPNISGVWDVDHARSLELTTMALMTATKMLKKGGNFVVKVFQGDLFEKYVQLVSEYFDKAFTTKPRASRDESAEVYVIGKRFNGRKFDINSKSPIVKLLDTNPEEKEITSPSLRKEISKEDSGLMIKRIKEMRSKKE</sequence>
<feature type="chain" id="PRO_1000087693" description="Ribosomal RNA large subunit methyltransferase E">
    <location>
        <begin position="1"/>
        <end position="258"/>
    </location>
</feature>
<feature type="active site" description="Proton acceptor" evidence="1">
    <location>
        <position position="160"/>
    </location>
</feature>
<feature type="binding site" evidence="1">
    <location>
        <position position="58"/>
    </location>
    <ligand>
        <name>S-adenosyl-L-methionine</name>
        <dbReference type="ChEBI" id="CHEBI:59789"/>
    </ligand>
</feature>
<feature type="binding site" evidence="1">
    <location>
        <position position="60"/>
    </location>
    <ligand>
        <name>S-adenosyl-L-methionine</name>
        <dbReference type="ChEBI" id="CHEBI:59789"/>
    </ligand>
</feature>
<feature type="binding site" evidence="1">
    <location>
        <position position="78"/>
    </location>
    <ligand>
        <name>S-adenosyl-L-methionine</name>
        <dbReference type="ChEBI" id="CHEBI:59789"/>
    </ligand>
</feature>
<feature type="binding site" evidence="1">
    <location>
        <position position="96"/>
    </location>
    <ligand>
        <name>S-adenosyl-L-methionine</name>
        <dbReference type="ChEBI" id="CHEBI:59789"/>
    </ligand>
</feature>
<feature type="binding site" evidence="1">
    <location>
        <position position="120"/>
    </location>
    <ligand>
        <name>S-adenosyl-L-methionine</name>
        <dbReference type="ChEBI" id="CHEBI:59789"/>
    </ligand>
</feature>
<accession>A6VJR0</accession>
<protein>
    <recommendedName>
        <fullName evidence="1">Ribosomal RNA large subunit methyltransferase E</fullName>
        <ecNumber evidence="1">2.1.1.166</ecNumber>
    </recommendedName>
    <alternativeName>
        <fullName evidence="1">23S rRNA Um2552 methyltransferase</fullName>
    </alternativeName>
    <alternativeName>
        <fullName evidence="1">rRNA (uridine-2'-O-)-methyltransferase</fullName>
    </alternativeName>
</protein>
<dbReference type="EC" id="2.1.1.166" evidence="1"/>
<dbReference type="EMBL" id="CP000745">
    <property type="protein sequence ID" value="ABR66686.1"/>
    <property type="molecule type" value="Genomic_DNA"/>
</dbReference>
<dbReference type="SMR" id="A6VJR0"/>
<dbReference type="STRING" id="426368.MmarC7_1628"/>
<dbReference type="KEGG" id="mmz:MmarC7_1628"/>
<dbReference type="eggNOG" id="arCOG00079">
    <property type="taxonomic scope" value="Archaea"/>
</dbReference>
<dbReference type="HOGENOM" id="CLU_009422_4_4_2"/>
<dbReference type="OrthoDB" id="26307at2157"/>
<dbReference type="GO" id="GO:0005737">
    <property type="term" value="C:cytoplasm"/>
    <property type="evidence" value="ECO:0007669"/>
    <property type="project" value="UniProtKB-SubCell"/>
</dbReference>
<dbReference type="GO" id="GO:0008650">
    <property type="term" value="F:rRNA (uridine-2'-O-)-methyltransferase activity"/>
    <property type="evidence" value="ECO:0007669"/>
    <property type="project" value="UniProtKB-UniRule"/>
</dbReference>
<dbReference type="CDD" id="cd20754">
    <property type="entry name" value="capping_2-OMTase_viral"/>
    <property type="match status" value="1"/>
</dbReference>
<dbReference type="Gene3D" id="3.40.50.150">
    <property type="entry name" value="Vaccinia Virus protein VP39"/>
    <property type="match status" value="1"/>
</dbReference>
<dbReference type="HAMAP" id="MF_01547">
    <property type="entry name" value="RNA_methyltr_E"/>
    <property type="match status" value="1"/>
</dbReference>
<dbReference type="InterPro" id="IPR050082">
    <property type="entry name" value="RNA_methyltr_RlmE"/>
</dbReference>
<dbReference type="InterPro" id="IPR002877">
    <property type="entry name" value="RNA_MeTrfase_FtsJ_dom"/>
</dbReference>
<dbReference type="InterPro" id="IPR015507">
    <property type="entry name" value="rRNA-MeTfrase_E"/>
</dbReference>
<dbReference type="InterPro" id="IPR029063">
    <property type="entry name" value="SAM-dependent_MTases_sf"/>
</dbReference>
<dbReference type="PANTHER" id="PTHR10920:SF13">
    <property type="entry name" value="PRE-RRNA 2'-O-RIBOSE RNA METHYLTRANSFERASE FTSJ3"/>
    <property type="match status" value="1"/>
</dbReference>
<dbReference type="PANTHER" id="PTHR10920">
    <property type="entry name" value="RIBOSOMAL RNA METHYLTRANSFERASE"/>
    <property type="match status" value="1"/>
</dbReference>
<dbReference type="Pfam" id="PF01728">
    <property type="entry name" value="FtsJ"/>
    <property type="match status" value="1"/>
</dbReference>
<dbReference type="PIRSF" id="PIRSF005461">
    <property type="entry name" value="23S_rRNA_mtase"/>
    <property type="match status" value="1"/>
</dbReference>
<dbReference type="SUPFAM" id="SSF53335">
    <property type="entry name" value="S-adenosyl-L-methionine-dependent methyltransferases"/>
    <property type="match status" value="1"/>
</dbReference>